<accession>Q7U3S0</accession>
<proteinExistence type="inferred from homology"/>
<comment type="function">
    <text evidence="1">Catalyzes the biosynthesis of agmatine from arginine.</text>
</comment>
<comment type="catalytic activity">
    <reaction evidence="1">
        <text>L-arginine + H(+) = agmatine + CO2</text>
        <dbReference type="Rhea" id="RHEA:17641"/>
        <dbReference type="ChEBI" id="CHEBI:15378"/>
        <dbReference type="ChEBI" id="CHEBI:16526"/>
        <dbReference type="ChEBI" id="CHEBI:32682"/>
        <dbReference type="ChEBI" id="CHEBI:58145"/>
        <dbReference type="EC" id="4.1.1.19"/>
    </reaction>
</comment>
<comment type="cofactor">
    <cofactor evidence="1">
        <name>Mg(2+)</name>
        <dbReference type="ChEBI" id="CHEBI:18420"/>
    </cofactor>
</comment>
<comment type="cofactor">
    <cofactor evidence="1">
        <name>pyridoxal 5'-phosphate</name>
        <dbReference type="ChEBI" id="CHEBI:597326"/>
    </cofactor>
</comment>
<comment type="similarity">
    <text evidence="1">Belongs to the Orn/Lys/Arg decarboxylase class-II family. SpeA subfamily.</text>
</comment>
<organism>
    <name type="scientific">Parasynechococcus marenigrum (strain WH8102)</name>
    <dbReference type="NCBI Taxonomy" id="84588"/>
    <lineage>
        <taxon>Bacteria</taxon>
        <taxon>Bacillati</taxon>
        <taxon>Cyanobacteriota</taxon>
        <taxon>Cyanophyceae</taxon>
        <taxon>Synechococcales</taxon>
        <taxon>Prochlorococcaceae</taxon>
        <taxon>Parasynechococcus</taxon>
        <taxon>Parasynechococcus marenigrum</taxon>
    </lineage>
</organism>
<gene>
    <name evidence="1" type="primary">speA</name>
    <name type="ordered locus">SYNW2359</name>
</gene>
<feature type="chain" id="PRO_0000149980" description="Biosynthetic arginine decarboxylase">
    <location>
        <begin position="1"/>
        <end position="644"/>
    </location>
</feature>
<feature type="binding site" evidence="1">
    <location>
        <begin position="287"/>
        <end position="297"/>
    </location>
    <ligand>
        <name>substrate</name>
    </ligand>
</feature>
<feature type="modified residue" description="N6-(pyridoxal phosphate)lysine" evidence="1">
    <location>
        <position position="105"/>
    </location>
</feature>
<dbReference type="EC" id="4.1.1.19" evidence="1"/>
<dbReference type="EMBL" id="BX569695">
    <property type="protein sequence ID" value="CAE08874.1"/>
    <property type="molecule type" value="Genomic_DNA"/>
</dbReference>
<dbReference type="RefSeq" id="WP_011129212.1">
    <property type="nucleotide sequence ID" value="NC_005070.1"/>
</dbReference>
<dbReference type="SMR" id="Q7U3S0"/>
<dbReference type="STRING" id="84588.SYNW2359"/>
<dbReference type="KEGG" id="syw:SYNW2359"/>
<dbReference type="eggNOG" id="COG1166">
    <property type="taxonomic scope" value="Bacteria"/>
</dbReference>
<dbReference type="HOGENOM" id="CLU_027243_1_0_3"/>
<dbReference type="Proteomes" id="UP000001422">
    <property type="component" value="Chromosome"/>
</dbReference>
<dbReference type="GO" id="GO:0008792">
    <property type="term" value="F:arginine decarboxylase activity"/>
    <property type="evidence" value="ECO:0007669"/>
    <property type="project" value="UniProtKB-UniRule"/>
</dbReference>
<dbReference type="GO" id="GO:0046872">
    <property type="term" value="F:metal ion binding"/>
    <property type="evidence" value="ECO:0007669"/>
    <property type="project" value="UniProtKB-KW"/>
</dbReference>
<dbReference type="GO" id="GO:0006527">
    <property type="term" value="P:arginine catabolic process"/>
    <property type="evidence" value="ECO:0007669"/>
    <property type="project" value="InterPro"/>
</dbReference>
<dbReference type="GO" id="GO:0008295">
    <property type="term" value="P:spermidine biosynthetic process"/>
    <property type="evidence" value="ECO:0007669"/>
    <property type="project" value="UniProtKB-UniRule"/>
</dbReference>
<dbReference type="CDD" id="cd06830">
    <property type="entry name" value="PLPDE_III_ADC"/>
    <property type="match status" value="1"/>
</dbReference>
<dbReference type="Gene3D" id="1.10.287.3440">
    <property type="match status" value="1"/>
</dbReference>
<dbReference type="Gene3D" id="1.20.58.930">
    <property type="match status" value="1"/>
</dbReference>
<dbReference type="Gene3D" id="3.20.20.10">
    <property type="entry name" value="Alanine racemase"/>
    <property type="match status" value="1"/>
</dbReference>
<dbReference type="Gene3D" id="2.40.37.10">
    <property type="entry name" value="Lyase, Ornithine Decarboxylase, Chain A, domain 1"/>
    <property type="match status" value="1"/>
</dbReference>
<dbReference type="HAMAP" id="MF_01417">
    <property type="entry name" value="SpeA"/>
    <property type="match status" value="1"/>
</dbReference>
<dbReference type="InterPro" id="IPR009006">
    <property type="entry name" value="Ala_racemase/Decarboxylase_C"/>
</dbReference>
<dbReference type="InterPro" id="IPR040634">
    <property type="entry name" value="Arg_decarb_HB"/>
</dbReference>
<dbReference type="InterPro" id="IPR041128">
    <property type="entry name" value="Arg_decarbox_C"/>
</dbReference>
<dbReference type="InterPro" id="IPR002985">
    <property type="entry name" value="Arg_decrbxlase"/>
</dbReference>
<dbReference type="InterPro" id="IPR022657">
    <property type="entry name" value="De-COase2_CS"/>
</dbReference>
<dbReference type="InterPro" id="IPR022644">
    <property type="entry name" value="De-COase2_N"/>
</dbReference>
<dbReference type="InterPro" id="IPR022653">
    <property type="entry name" value="De-COase2_pyr-phos_BS"/>
</dbReference>
<dbReference type="InterPro" id="IPR000183">
    <property type="entry name" value="Orn/DAP/Arg_de-COase"/>
</dbReference>
<dbReference type="InterPro" id="IPR029066">
    <property type="entry name" value="PLP-binding_barrel"/>
</dbReference>
<dbReference type="NCBIfam" id="NF003763">
    <property type="entry name" value="PRK05354.1"/>
    <property type="match status" value="1"/>
</dbReference>
<dbReference type="NCBIfam" id="TIGR01273">
    <property type="entry name" value="speA"/>
    <property type="match status" value="1"/>
</dbReference>
<dbReference type="PANTHER" id="PTHR43295">
    <property type="entry name" value="ARGININE DECARBOXYLASE"/>
    <property type="match status" value="1"/>
</dbReference>
<dbReference type="PANTHER" id="PTHR43295:SF9">
    <property type="entry name" value="BIOSYNTHETIC ARGININE DECARBOXYLASE"/>
    <property type="match status" value="1"/>
</dbReference>
<dbReference type="Pfam" id="PF17810">
    <property type="entry name" value="Arg_decarb_HB"/>
    <property type="match status" value="1"/>
</dbReference>
<dbReference type="Pfam" id="PF17944">
    <property type="entry name" value="Arg_decarbox_C"/>
    <property type="match status" value="1"/>
</dbReference>
<dbReference type="Pfam" id="PF02784">
    <property type="entry name" value="Orn_Arg_deC_N"/>
    <property type="match status" value="1"/>
</dbReference>
<dbReference type="PIRSF" id="PIRSF001336">
    <property type="entry name" value="Arg_decrbxlase"/>
    <property type="match status" value="1"/>
</dbReference>
<dbReference type="PRINTS" id="PR01180">
    <property type="entry name" value="ARGDCRBXLASE"/>
</dbReference>
<dbReference type="PRINTS" id="PR01179">
    <property type="entry name" value="ODADCRBXLASE"/>
</dbReference>
<dbReference type="SUPFAM" id="SSF50621">
    <property type="entry name" value="Alanine racemase C-terminal domain-like"/>
    <property type="match status" value="1"/>
</dbReference>
<dbReference type="SUPFAM" id="SSF51419">
    <property type="entry name" value="PLP-binding barrel"/>
    <property type="match status" value="1"/>
</dbReference>
<dbReference type="PROSITE" id="PS00878">
    <property type="entry name" value="ODR_DC_2_1"/>
    <property type="match status" value="1"/>
</dbReference>
<dbReference type="PROSITE" id="PS00879">
    <property type="entry name" value="ODR_DC_2_2"/>
    <property type="match status" value="1"/>
</dbReference>
<reference key="1">
    <citation type="journal article" date="2003" name="Nature">
        <title>The genome of a motile marine Synechococcus.</title>
        <authorList>
            <person name="Palenik B."/>
            <person name="Brahamsha B."/>
            <person name="Larimer F.W."/>
            <person name="Land M.L."/>
            <person name="Hauser L."/>
            <person name="Chain P."/>
            <person name="Lamerdin J.E."/>
            <person name="Regala W."/>
            <person name="Allen E.E."/>
            <person name="McCarren J."/>
            <person name="Paulsen I.T."/>
            <person name="Dufresne A."/>
            <person name="Partensky F."/>
            <person name="Webb E.A."/>
            <person name="Waterbury J."/>
        </authorList>
    </citation>
    <scope>NUCLEOTIDE SEQUENCE [LARGE SCALE GENOMIC DNA]</scope>
    <source>
        <strain>WH8102</strain>
    </source>
</reference>
<protein>
    <recommendedName>
        <fullName evidence="1">Biosynthetic arginine decarboxylase</fullName>
        <shortName evidence="1">ADC</shortName>
        <ecNumber evidence="1">4.1.1.19</ecNumber>
    </recommendedName>
</protein>
<name>SPEA_PARMW</name>
<sequence>MQVADSEGWSIQDSAALYGLDRWGEPYFTINGRGHISVQPQGERGGSLDLVELVSELRGRNLGLPLLIRFDDILEDRLERLHAAFERAIAQYSYTGRYQGVFPVKCNQQRHVVEELVICGKRWNFGLEAGSKAELLIALSLLDDPEALLICNGYKDRLYIETAILARRLGRQPVVVIEQPDEVDRIIEASKSLGAAPYIGVRAKLSSRSTGRWGSSVGDKAKFGLSIPELLATVERLRESNLLPDLRLLHFHIGSQINDIAVLKDALQEAGQIYVELTRLGAPMGFLDVGGGLGIDYDGSRTASAASTNYSLQNYANDVVATVRECCEPNAVAVPTLVSESGRAIASHFSLLVFDVLGSSALSASIPNASGDEPLTVRNLRDTLVTIQELSGTADAQLVRLQEAWNDALKFKQDALAAFRLGYMGLPDRASAEQLTWACADAIAQRLPKEQAIPEELAALSKALAGTYYANLSIFRSAPDTWAIDQLFPVVPIQKLNQRPTRLANLADLTCDSDGRLDRFIGDGQPKQLLELHELDDNNPYLIGLFLSGAYQEVMGNLHNLFGTTNAVHIRLSPGGSYRIDHVVRGDTNADVLEAMEHDPRVLLERLRVAAEAAINDGQLRIDESRRLLDHLESSLRQTTYLQD</sequence>
<evidence type="ECO:0000255" key="1">
    <source>
        <dbReference type="HAMAP-Rule" id="MF_01417"/>
    </source>
</evidence>
<keyword id="KW-0210">Decarboxylase</keyword>
<keyword id="KW-0456">Lyase</keyword>
<keyword id="KW-0460">Magnesium</keyword>
<keyword id="KW-0479">Metal-binding</keyword>
<keyword id="KW-0620">Polyamine biosynthesis</keyword>
<keyword id="KW-0663">Pyridoxal phosphate</keyword>
<keyword id="KW-0745">Spermidine biosynthesis</keyword>